<comment type="function">
    <text evidence="1">Cell wall formation.</text>
</comment>
<comment type="catalytic activity">
    <reaction evidence="1">
        <text>UDP-N-acetyl-alpha-D-muramate + NADP(+) = UDP-N-acetyl-3-O-(1-carboxyvinyl)-alpha-D-glucosamine + NADPH + H(+)</text>
        <dbReference type="Rhea" id="RHEA:12248"/>
        <dbReference type="ChEBI" id="CHEBI:15378"/>
        <dbReference type="ChEBI" id="CHEBI:57783"/>
        <dbReference type="ChEBI" id="CHEBI:58349"/>
        <dbReference type="ChEBI" id="CHEBI:68483"/>
        <dbReference type="ChEBI" id="CHEBI:70757"/>
        <dbReference type="EC" id="1.3.1.98"/>
    </reaction>
</comment>
<comment type="cofactor">
    <cofactor evidence="1">
        <name>FAD</name>
        <dbReference type="ChEBI" id="CHEBI:57692"/>
    </cofactor>
</comment>
<comment type="pathway">
    <text evidence="1">Cell wall biogenesis; peptidoglycan biosynthesis.</text>
</comment>
<comment type="subcellular location">
    <subcellularLocation>
        <location evidence="1">Cytoplasm</location>
    </subcellularLocation>
</comment>
<comment type="similarity">
    <text evidence="1">Belongs to the MurB family.</text>
</comment>
<accession>Q46I41</accession>
<protein>
    <recommendedName>
        <fullName evidence="1">UDP-N-acetylenolpyruvoylglucosamine reductase</fullName>
        <ecNumber evidence="1">1.3.1.98</ecNumber>
    </recommendedName>
    <alternativeName>
        <fullName evidence="1">UDP-N-acetylmuramate dehydrogenase</fullName>
    </alternativeName>
</protein>
<gene>
    <name evidence="1" type="primary">murB</name>
    <name type="ordered locus">PMN2A_1348</name>
</gene>
<reference key="1">
    <citation type="journal article" date="2007" name="PLoS Genet.">
        <title>Patterns and implications of gene gain and loss in the evolution of Prochlorococcus.</title>
        <authorList>
            <person name="Kettler G.C."/>
            <person name="Martiny A.C."/>
            <person name="Huang K."/>
            <person name="Zucker J."/>
            <person name="Coleman M.L."/>
            <person name="Rodrigue S."/>
            <person name="Chen F."/>
            <person name="Lapidus A."/>
            <person name="Ferriera S."/>
            <person name="Johnson J."/>
            <person name="Steglich C."/>
            <person name="Church G.M."/>
            <person name="Richardson P."/>
            <person name="Chisholm S.W."/>
        </authorList>
    </citation>
    <scope>NUCLEOTIDE SEQUENCE [LARGE SCALE GENOMIC DNA]</scope>
    <source>
        <strain>NATL2A</strain>
    </source>
</reference>
<evidence type="ECO:0000255" key="1">
    <source>
        <dbReference type="HAMAP-Rule" id="MF_00037"/>
    </source>
</evidence>
<organism>
    <name type="scientific">Prochlorococcus marinus (strain NATL2A)</name>
    <dbReference type="NCBI Taxonomy" id="59920"/>
    <lineage>
        <taxon>Bacteria</taxon>
        <taxon>Bacillati</taxon>
        <taxon>Cyanobacteriota</taxon>
        <taxon>Cyanophyceae</taxon>
        <taxon>Synechococcales</taxon>
        <taxon>Prochlorococcaceae</taxon>
        <taxon>Prochlorococcus</taxon>
    </lineage>
</organism>
<name>MURB_PROMT</name>
<feature type="chain" id="PRO_0000224704" description="UDP-N-acetylenolpyruvoylglucosamine reductase">
    <location>
        <begin position="1"/>
        <end position="291"/>
    </location>
</feature>
<feature type="domain" description="FAD-binding PCMH-type" evidence="1">
    <location>
        <begin position="19"/>
        <end position="186"/>
    </location>
</feature>
<feature type="active site" evidence="1">
    <location>
        <position position="165"/>
    </location>
</feature>
<feature type="active site" description="Proton donor" evidence="1">
    <location>
        <position position="215"/>
    </location>
</feature>
<feature type="active site" evidence="1">
    <location>
        <position position="285"/>
    </location>
</feature>
<proteinExistence type="inferred from homology"/>
<dbReference type="EC" id="1.3.1.98" evidence="1"/>
<dbReference type="EMBL" id="CP000095">
    <property type="protein sequence ID" value="AAZ58837.1"/>
    <property type="molecule type" value="Genomic_DNA"/>
</dbReference>
<dbReference type="RefSeq" id="WP_011293981.1">
    <property type="nucleotide sequence ID" value="NC_007335.2"/>
</dbReference>
<dbReference type="SMR" id="Q46I41"/>
<dbReference type="STRING" id="59920.PMN2A_1348"/>
<dbReference type="KEGG" id="pmn:PMN2A_1348"/>
<dbReference type="HOGENOM" id="CLU_035304_1_1_3"/>
<dbReference type="OrthoDB" id="9804753at2"/>
<dbReference type="PhylomeDB" id="Q46I41"/>
<dbReference type="UniPathway" id="UPA00219"/>
<dbReference type="Proteomes" id="UP000002535">
    <property type="component" value="Chromosome"/>
</dbReference>
<dbReference type="GO" id="GO:0005829">
    <property type="term" value="C:cytosol"/>
    <property type="evidence" value="ECO:0007669"/>
    <property type="project" value="TreeGrafter"/>
</dbReference>
<dbReference type="GO" id="GO:0071949">
    <property type="term" value="F:FAD binding"/>
    <property type="evidence" value="ECO:0007669"/>
    <property type="project" value="InterPro"/>
</dbReference>
<dbReference type="GO" id="GO:0008762">
    <property type="term" value="F:UDP-N-acetylmuramate dehydrogenase activity"/>
    <property type="evidence" value="ECO:0007669"/>
    <property type="project" value="UniProtKB-UniRule"/>
</dbReference>
<dbReference type="GO" id="GO:0051301">
    <property type="term" value="P:cell division"/>
    <property type="evidence" value="ECO:0007669"/>
    <property type="project" value="UniProtKB-KW"/>
</dbReference>
<dbReference type="GO" id="GO:0071555">
    <property type="term" value="P:cell wall organization"/>
    <property type="evidence" value="ECO:0007669"/>
    <property type="project" value="UniProtKB-KW"/>
</dbReference>
<dbReference type="GO" id="GO:0009252">
    <property type="term" value="P:peptidoglycan biosynthetic process"/>
    <property type="evidence" value="ECO:0007669"/>
    <property type="project" value="UniProtKB-UniRule"/>
</dbReference>
<dbReference type="GO" id="GO:0008360">
    <property type="term" value="P:regulation of cell shape"/>
    <property type="evidence" value="ECO:0007669"/>
    <property type="project" value="UniProtKB-KW"/>
</dbReference>
<dbReference type="Gene3D" id="3.30.465.10">
    <property type="match status" value="1"/>
</dbReference>
<dbReference type="Gene3D" id="3.90.78.10">
    <property type="entry name" value="UDP-N-acetylenolpyruvoylglucosamine reductase, C-terminal domain"/>
    <property type="match status" value="1"/>
</dbReference>
<dbReference type="Gene3D" id="3.30.43.10">
    <property type="entry name" value="Uridine Diphospho-n-acetylenolpyruvylglucosamine Reductase, domain 2"/>
    <property type="match status" value="1"/>
</dbReference>
<dbReference type="HAMAP" id="MF_00037">
    <property type="entry name" value="MurB"/>
    <property type="match status" value="1"/>
</dbReference>
<dbReference type="InterPro" id="IPR016166">
    <property type="entry name" value="FAD-bd_PCMH"/>
</dbReference>
<dbReference type="InterPro" id="IPR036318">
    <property type="entry name" value="FAD-bd_PCMH-like_sf"/>
</dbReference>
<dbReference type="InterPro" id="IPR016167">
    <property type="entry name" value="FAD-bd_PCMH_sub1"/>
</dbReference>
<dbReference type="InterPro" id="IPR016169">
    <property type="entry name" value="FAD-bd_PCMH_sub2"/>
</dbReference>
<dbReference type="InterPro" id="IPR003170">
    <property type="entry name" value="MurB"/>
</dbReference>
<dbReference type="InterPro" id="IPR011601">
    <property type="entry name" value="MurB_C"/>
</dbReference>
<dbReference type="InterPro" id="IPR036635">
    <property type="entry name" value="MurB_C_sf"/>
</dbReference>
<dbReference type="InterPro" id="IPR006094">
    <property type="entry name" value="Oxid_FAD_bind_N"/>
</dbReference>
<dbReference type="NCBIfam" id="TIGR00179">
    <property type="entry name" value="murB"/>
    <property type="match status" value="1"/>
</dbReference>
<dbReference type="NCBIfam" id="NF010480">
    <property type="entry name" value="PRK13905.1"/>
    <property type="match status" value="1"/>
</dbReference>
<dbReference type="PANTHER" id="PTHR21071">
    <property type="entry name" value="UDP-N-ACETYLENOLPYRUVOYLGLUCOSAMINE REDUCTASE"/>
    <property type="match status" value="1"/>
</dbReference>
<dbReference type="PANTHER" id="PTHR21071:SF4">
    <property type="entry name" value="UDP-N-ACETYLENOLPYRUVOYLGLUCOSAMINE REDUCTASE"/>
    <property type="match status" value="1"/>
</dbReference>
<dbReference type="Pfam" id="PF01565">
    <property type="entry name" value="FAD_binding_4"/>
    <property type="match status" value="1"/>
</dbReference>
<dbReference type="Pfam" id="PF02873">
    <property type="entry name" value="MurB_C"/>
    <property type="match status" value="1"/>
</dbReference>
<dbReference type="SUPFAM" id="SSF56176">
    <property type="entry name" value="FAD-binding/transporter-associated domain-like"/>
    <property type="match status" value="1"/>
</dbReference>
<dbReference type="SUPFAM" id="SSF56194">
    <property type="entry name" value="Uridine diphospho-N-Acetylenolpyruvylglucosamine reductase, MurB, C-terminal domain"/>
    <property type="match status" value="1"/>
</dbReference>
<dbReference type="PROSITE" id="PS51387">
    <property type="entry name" value="FAD_PCMH"/>
    <property type="match status" value="1"/>
</dbReference>
<keyword id="KW-0131">Cell cycle</keyword>
<keyword id="KW-0132">Cell division</keyword>
<keyword id="KW-0133">Cell shape</keyword>
<keyword id="KW-0961">Cell wall biogenesis/degradation</keyword>
<keyword id="KW-0963">Cytoplasm</keyword>
<keyword id="KW-0274">FAD</keyword>
<keyword id="KW-0285">Flavoprotein</keyword>
<keyword id="KW-0521">NADP</keyword>
<keyword id="KW-0560">Oxidoreductase</keyword>
<keyword id="KW-0573">Peptidoglycan synthesis</keyword>
<keyword id="KW-1185">Reference proteome</keyword>
<sequence length="291" mass="32036">MNSIKLEKNISLSNFTTWGIGGPAEWIAQPKNIEELKYVINWTNKKKIPCSVIGAGSNLLINDKGIKGLSLCMRNFKGIEIDKNNGIIEVLSGEMLPTLARKAAASGLHGFEWAVGIPGTIGGAVVMNAGAQEHCISSYLESITTLSLTGEYQRIKGKDLNFGYRQSLLQNEKLIVVSARLKLASGHAKEIRQVTNENLNHRLKTQPYQAQTCGSVFRNPEPLKAAKLIEELGLKGFRFGGAEISKIHSNFIINANQASSNDVRELIKYVKKRVFDSYGILLETEVKQCGF</sequence>